<keyword id="KW-1003">Cell membrane</keyword>
<keyword id="KW-0408">Iron</keyword>
<keyword id="KW-0472">Membrane</keyword>
<keyword id="KW-0479">Metal-binding</keyword>
<keyword id="KW-0503">Monooxygenase</keyword>
<keyword id="KW-0560">Oxidoreductase</keyword>
<keyword id="KW-0831">Ubiquinone biosynthesis</keyword>
<proteinExistence type="inferred from homology"/>
<gene>
    <name evidence="1" type="primary">coq7</name>
    <name type="ordered locus">Ajs_0681</name>
</gene>
<evidence type="ECO:0000255" key="1">
    <source>
        <dbReference type="HAMAP-Rule" id="MF_01658"/>
    </source>
</evidence>
<organism>
    <name type="scientific">Acidovorax sp. (strain JS42)</name>
    <dbReference type="NCBI Taxonomy" id="232721"/>
    <lineage>
        <taxon>Bacteria</taxon>
        <taxon>Pseudomonadati</taxon>
        <taxon>Pseudomonadota</taxon>
        <taxon>Betaproteobacteria</taxon>
        <taxon>Burkholderiales</taxon>
        <taxon>Comamonadaceae</taxon>
        <taxon>Acidovorax</taxon>
    </lineage>
</organism>
<reference key="1">
    <citation type="submission" date="2006-12" db="EMBL/GenBank/DDBJ databases">
        <title>Complete sequence of chromosome 1 of Acidovorax sp. JS42.</title>
        <authorList>
            <person name="Copeland A."/>
            <person name="Lucas S."/>
            <person name="Lapidus A."/>
            <person name="Barry K."/>
            <person name="Detter J.C."/>
            <person name="Glavina del Rio T."/>
            <person name="Dalin E."/>
            <person name="Tice H."/>
            <person name="Pitluck S."/>
            <person name="Chertkov O."/>
            <person name="Brettin T."/>
            <person name="Bruce D."/>
            <person name="Han C."/>
            <person name="Tapia R."/>
            <person name="Gilna P."/>
            <person name="Schmutz J."/>
            <person name="Larimer F."/>
            <person name="Land M."/>
            <person name="Hauser L."/>
            <person name="Kyrpides N."/>
            <person name="Kim E."/>
            <person name="Stahl D."/>
            <person name="Richardson P."/>
        </authorList>
    </citation>
    <scope>NUCLEOTIDE SEQUENCE [LARGE SCALE GENOMIC DNA]</scope>
    <source>
        <strain>JS42</strain>
    </source>
</reference>
<protein>
    <recommendedName>
        <fullName evidence="1">3-demethoxyubiquinol 3-hydroxylase</fullName>
        <shortName evidence="1">DMQ hydroxylase</shortName>
        <ecNumber evidence="1">1.14.99.60</ecNumber>
    </recommendedName>
    <alternativeName>
        <fullName evidence="1">2-nonaprenyl-3-methyl-6-methoxy-1,4-benzoquinol hydroxylase</fullName>
    </alternativeName>
</protein>
<feature type="chain" id="PRO_0000338651" description="3-demethoxyubiquinol 3-hydroxylase">
    <location>
        <begin position="1"/>
        <end position="205"/>
    </location>
</feature>
<feature type="binding site" evidence="1">
    <location>
        <position position="54"/>
    </location>
    <ligand>
        <name>Fe cation</name>
        <dbReference type="ChEBI" id="CHEBI:24875"/>
        <label>1</label>
    </ligand>
</feature>
<feature type="binding site" evidence="1">
    <location>
        <position position="84"/>
    </location>
    <ligand>
        <name>Fe cation</name>
        <dbReference type="ChEBI" id="CHEBI:24875"/>
        <label>1</label>
    </ligand>
</feature>
<feature type="binding site" evidence="1">
    <location>
        <position position="84"/>
    </location>
    <ligand>
        <name>Fe cation</name>
        <dbReference type="ChEBI" id="CHEBI:24875"/>
        <label>2</label>
    </ligand>
</feature>
<feature type="binding site" evidence="1">
    <location>
        <position position="87"/>
    </location>
    <ligand>
        <name>Fe cation</name>
        <dbReference type="ChEBI" id="CHEBI:24875"/>
        <label>1</label>
    </ligand>
</feature>
<feature type="binding site" evidence="1">
    <location>
        <position position="136"/>
    </location>
    <ligand>
        <name>Fe cation</name>
        <dbReference type="ChEBI" id="CHEBI:24875"/>
        <label>2</label>
    </ligand>
</feature>
<feature type="binding site" evidence="1">
    <location>
        <position position="168"/>
    </location>
    <ligand>
        <name>Fe cation</name>
        <dbReference type="ChEBI" id="CHEBI:24875"/>
        <label>1</label>
    </ligand>
</feature>
<feature type="binding site" evidence="1">
    <location>
        <position position="168"/>
    </location>
    <ligand>
        <name>Fe cation</name>
        <dbReference type="ChEBI" id="CHEBI:24875"/>
        <label>2</label>
    </ligand>
</feature>
<feature type="binding site" evidence="1">
    <location>
        <position position="171"/>
    </location>
    <ligand>
        <name>Fe cation</name>
        <dbReference type="ChEBI" id="CHEBI:24875"/>
        <label>2</label>
    </ligand>
</feature>
<dbReference type="EC" id="1.14.99.60" evidence="1"/>
<dbReference type="EMBL" id="CP000539">
    <property type="protein sequence ID" value="ABM40926.1"/>
    <property type="molecule type" value="Genomic_DNA"/>
</dbReference>
<dbReference type="SMR" id="A1W3V1"/>
<dbReference type="STRING" id="232721.Ajs_0681"/>
<dbReference type="KEGG" id="ajs:Ajs_0681"/>
<dbReference type="eggNOG" id="COG2941">
    <property type="taxonomic scope" value="Bacteria"/>
</dbReference>
<dbReference type="HOGENOM" id="CLU_088601_0_0_4"/>
<dbReference type="UniPathway" id="UPA00232"/>
<dbReference type="Proteomes" id="UP000000645">
    <property type="component" value="Chromosome"/>
</dbReference>
<dbReference type="GO" id="GO:0005886">
    <property type="term" value="C:plasma membrane"/>
    <property type="evidence" value="ECO:0007669"/>
    <property type="project" value="UniProtKB-SubCell"/>
</dbReference>
<dbReference type="GO" id="GO:0008682">
    <property type="term" value="F:3-demethoxyubiquinol 3-hydroxylase activity"/>
    <property type="evidence" value="ECO:0007669"/>
    <property type="project" value="UniProtKB-EC"/>
</dbReference>
<dbReference type="GO" id="GO:0046872">
    <property type="term" value="F:metal ion binding"/>
    <property type="evidence" value="ECO:0007669"/>
    <property type="project" value="UniProtKB-KW"/>
</dbReference>
<dbReference type="GO" id="GO:0006744">
    <property type="term" value="P:ubiquinone biosynthetic process"/>
    <property type="evidence" value="ECO:0007669"/>
    <property type="project" value="UniProtKB-UniRule"/>
</dbReference>
<dbReference type="CDD" id="cd01042">
    <property type="entry name" value="DMQH"/>
    <property type="match status" value="1"/>
</dbReference>
<dbReference type="Gene3D" id="1.20.1260.10">
    <property type="match status" value="1"/>
</dbReference>
<dbReference type="HAMAP" id="MF_01658">
    <property type="entry name" value="COQ7"/>
    <property type="match status" value="1"/>
</dbReference>
<dbReference type="InterPro" id="IPR047809">
    <property type="entry name" value="COQ7_proteobact"/>
</dbReference>
<dbReference type="InterPro" id="IPR012347">
    <property type="entry name" value="Ferritin-like"/>
</dbReference>
<dbReference type="InterPro" id="IPR009078">
    <property type="entry name" value="Ferritin-like_SF"/>
</dbReference>
<dbReference type="InterPro" id="IPR011566">
    <property type="entry name" value="Ubq_synth_Coq7"/>
</dbReference>
<dbReference type="NCBIfam" id="NF033656">
    <property type="entry name" value="DMQ_monoox_COQ7"/>
    <property type="match status" value="1"/>
</dbReference>
<dbReference type="PANTHER" id="PTHR11237:SF4">
    <property type="entry name" value="5-DEMETHOXYUBIQUINONE HYDROXYLASE, MITOCHONDRIAL"/>
    <property type="match status" value="1"/>
</dbReference>
<dbReference type="PANTHER" id="PTHR11237">
    <property type="entry name" value="COENZYME Q10 BIOSYNTHESIS PROTEIN 7"/>
    <property type="match status" value="1"/>
</dbReference>
<dbReference type="Pfam" id="PF03232">
    <property type="entry name" value="COQ7"/>
    <property type="match status" value="1"/>
</dbReference>
<dbReference type="SUPFAM" id="SSF47240">
    <property type="entry name" value="Ferritin-like"/>
    <property type="match status" value="1"/>
</dbReference>
<comment type="function">
    <text evidence="1">Catalyzes the hydroxylation of 2-nonaprenyl-3-methyl-6-methoxy-1,4-benzoquinol during ubiquinone biosynthesis.</text>
</comment>
<comment type="catalytic activity">
    <reaction evidence="1">
        <text>a 5-methoxy-2-methyl-3-(all-trans-polyprenyl)benzene-1,4-diol + AH2 + O2 = a 3-demethylubiquinol + A + H2O</text>
        <dbReference type="Rhea" id="RHEA:50908"/>
        <dbReference type="Rhea" id="RHEA-COMP:10859"/>
        <dbReference type="Rhea" id="RHEA-COMP:10914"/>
        <dbReference type="ChEBI" id="CHEBI:13193"/>
        <dbReference type="ChEBI" id="CHEBI:15377"/>
        <dbReference type="ChEBI" id="CHEBI:15379"/>
        <dbReference type="ChEBI" id="CHEBI:17499"/>
        <dbReference type="ChEBI" id="CHEBI:84167"/>
        <dbReference type="ChEBI" id="CHEBI:84422"/>
        <dbReference type="EC" id="1.14.99.60"/>
    </reaction>
</comment>
<comment type="cofactor">
    <cofactor evidence="1">
        <name>Fe cation</name>
        <dbReference type="ChEBI" id="CHEBI:24875"/>
    </cofactor>
    <text evidence="1">Binds 2 iron ions per subunit.</text>
</comment>
<comment type="pathway">
    <text evidence="1">Cofactor biosynthesis; ubiquinone biosynthesis.</text>
</comment>
<comment type="subcellular location">
    <subcellularLocation>
        <location evidence="1">Cell membrane</location>
        <topology evidence="1">Peripheral membrane protein</topology>
    </subcellularLocation>
</comment>
<comment type="similarity">
    <text evidence="1">Belongs to the COQ7 family.</text>
</comment>
<sequence length="205" mass="22346">MDTLLVAADSALRTLFARPRAGEPSPARSLPAVDLSVEQRRLSSALMRVNHVGEVCAQGLYMAQSCVTRDPQLRSDLLAAAREETDHLAWTRERLDALGSRPSLLNPLWFAGAFAIGLVAARVSDQASLGFVVETERQVSAHLQGHLRRLPEADLPSRAIVDRMQRDEERHAAQAQAAGALPLPPPARWLMKAAAKVMTTTAHHI</sequence>
<accession>A1W3V1</accession>
<name>COQ7_ACISJ</name>